<protein>
    <recommendedName>
        <fullName evidence="1">ESAT-6-like protein EsxT</fullName>
    </recommendedName>
</protein>
<comment type="subunit">
    <text evidence="1">Forms a tight 1:1 complex with EsxU.</text>
</comment>
<comment type="subcellular location">
    <subcellularLocation>
        <location evidence="1">Secreted</location>
    </subcellularLocation>
    <text evidence="1">Probably secreted via the ESX-4 / type VII secretion system (T7SS).</text>
</comment>
<comment type="induction">
    <text evidence="2">Transcriptionally regulated by the sigma factor SigM.</text>
</comment>
<comment type="similarity">
    <text evidence="4">Belongs to the WXG100 family. ESAT-6 subfamily.</text>
</comment>
<sequence>MNADPVLSYNFDAIEYSVRQEIHTTAARFNAALQELRSQIAPLQQLWTREAAAAYHAEQLKWHQAASALNEILIDLGNAVRHGADDVAHADRRAAGAWAR</sequence>
<keyword id="KW-1185">Reference proteome</keyword>
<keyword id="KW-0964">Secreted</keyword>
<evidence type="ECO:0000250" key="1">
    <source>
        <dbReference type="UniProtKB" id="I6YC53"/>
    </source>
</evidence>
<evidence type="ECO:0000269" key="2">
    <source>
    </source>
</evidence>
<evidence type="ECO:0000303" key="3">
    <source>
    </source>
</evidence>
<evidence type="ECO:0000305" key="4"/>
<evidence type="ECO:0000312" key="5">
    <source>
        <dbReference type="EMBL" id="AAK47890.1"/>
    </source>
</evidence>
<proteinExistence type="evidence at transcript level"/>
<accession>O06261</accession>
<accession>F2GIJ8</accession>
<accession>Q7D5J2</accession>
<reference key="1">
    <citation type="journal article" date="2002" name="J. Bacteriol.">
        <title>Whole-genome comparison of Mycobacterium tuberculosis clinical and laboratory strains.</title>
        <authorList>
            <person name="Fleischmann R.D."/>
            <person name="Alland D."/>
            <person name="Eisen J.A."/>
            <person name="Carpenter L."/>
            <person name="White O."/>
            <person name="Peterson J.D."/>
            <person name="DeBoy R.T."/>
            <person name="Dodson R.J."/>
            <person name="Gwinn M.L."/>
            <person name="Haft D.H."/>
            <person name="Hickey E.K."/>
            <person name="Kolonay J.F."/>
            <person name="Nelson W.C."/>
            <person name="Umayam L.A."/>
            <person name="Ermolaeva M.D."/>
            <person name="Salzberg S.L."/>
            <person name="Delcher A."/>
            <person name="Utterback T.R."/>
            <person name="Weidman J.F."/>
            <person name="Khouri H.M."/>
            <person name="Gill J."/>
            <person name="Mikula A."/>
            <person name="Bishai W."/>
            <person name="Jacobs W.R. Jr."/>
            <person name="Venter J.C."/>
            <person name="Fraser C.M."/>
        </authorList>
    </citation>
    <scope>NUCLEOTIDE SEQUENCE [LARGE SCALE GENOMIC DNA]</scope>
    <source>
        <strain>CDC 1551 / Oshkosh</strain>
    </source>
</reference>
<reference key="2">
    <citation type="journal article" date="2007" name="Infect. Immun.">
        <title>Characterization of the Mycobacterium tuberculosis sigma factor SigM by assessment of virulence and identification of SigM-dependent genes.</title>
        <authorList>
            <person name="Agarwal N."/>
            <person name="Woolwine S.C."/>
            <person name="Tyagi S."/>
            <person name="Bishai W.R."/>
        </authorList>
    </citation>
    <scope>INDUCTION</scope>
    <source>
        <strain>CDC 1551 / Oshkosh</strain>
    </source>
</reference>
<gene>
    <name evidence="3" type="primary">esxT</name>
    <name evidence="5" type="ordered locus">MT3549</name>
</gene>
<organism>
    <name type="scientific">Mycobacterium tuberculosis (strain CDC 1551 / Oshkosh)</name>
    <dbReference type="NCBI Taxonomy" id="83331"/>
    <lineage>
        <taxon>Bacteria</taxon>
        <taxon>Bacillati</taxon>
        <taxon>Actinomycetota</taxon>
        <taxon>Actinomycetes</taxon>
        <taxon>Mycobacteriales</taxon>
        <taxon>Mycobacteriaceae</taxon>
        <taxon>Mycobacterium</taxon>
        <taxon>Mycobacterium tuberculosis complex</taxon>
    </lineage>
</organism>
<dbReference type="EMBL" id="AE000516">
    <property type="protein sequence ID" value="AAK47890.1"/>
    <property type="molecule type" value="Genomic_DNA"/>
</dbReference>
<dbReference type="PIR" id="B70977">
    <property type="entry name" value="B70977"/>
</dbReference>
<dbReference type="RefSeq" id="WP_003900059.1">
    <property type="nucleotide sequence ID" value="NZ_KK341227.1"/>
</dbReference>
<dbReference type="SMR" id="O06261"/>
<dbReference type="KEGG" id="mtc:MT3549"/>
<dbReference type="PATRIC" id="fig|83331.31.peg.3808"/>
<dbReference type="HOGENOM" id="CLU_151185_3_4_11"/>
<dbReference type="Proteomes" id="UP000001020">
    <property type="component" value="Chromosome"/>
</dbReference>
<dbReference type="GO" id="GO:0005576">
    <property type="term" value="C:extracellular region"/>
    <property type="evidence" value="ECO:0007669"/>
    <property type="project" value="UniProtKB-SubCell"/>
</dbReference>
<dbReference type="Gene3D" id="1.10.287.1060">
    <property type="entry name" value="ESAT-6-like"/>
    <property type="match status" value="1"/>
</dbReference>
<dbReference type="InterPro" id="IPR036689">
    <property type="entry name" value="ESAT-6-like_sf"/>
</dbReference>
<dbReference type="InterPro" id="IPR010310">
    <property type="entry name" value="T7SS_ESAT-6-like"/>
</dbReference>
<dbReference type="NCBIfam" id="TIGR03930">
    <property type="entry name" value="WXG100_ESAT6"/>
    <property type="match status" value="1"/>
</dbReference>
<dbReference type="Pfam" id="PF06013">
    <property type="entry name" value="WXG100"/>
    <property type="match status" value="1"/>
</dbReference>
<dbReference type="SUPFAM" id="SSF140453">
    <property type="entry name" value="EsxAB dimer-like"/>
    <property type="match status" value="1"/>
</dbReference>
<feature type="chain" id="PRO_0000436934" description="ESAT-6-like protein EsxT">
    <location>
        <begin position="1"/>
        <end position="100"/>
    </location>
</feature>
<name>ESXT_MYCTO</name>